<gene>
    <name type="ordered locus">RC0549</name>
</gene>
<keyword id="KW-0121">Carboxypeptidase</keyword>
<keyword id="KW-0378">Hydrolase</keyword>
<keyword id="KW-0645">Protease</keyword>
<keyword id="KW-0720">Serine protease</keyword>
<organism>
    <name type="scientific">Rickettsia conorii (strain ATCC VR-613 / Malish 7)</name>
    <dbReference type="NCBI Taxonomy" id="272944"/>
    <lineage>
        <taxon>Bacteria</taxon>
        <taxon>Pseudomonadati</taxon>
        <taxon>Pseudomonadota</taxon>
        <taxon>Alphaproteobacteria</taxon>
        <taxon>Rickettsiales</taxon>
        <taxon>Rickettsiaceae</taxon>
        <taxon>Rickettsieae</taxon>
        <taxon>Rickettsia</taxon>
        <taxon>spotted fever group</taxon>
    </lineage>
</organism>
<sequence>MILKNISLLIILFFSISTFSAGHSLKNISITVVAPATGADNKTLSDLKNINGLNLQISSKCFAKGKLPFLASSDEVRFNCLRDALFDESDNIVWSLRGGYGSARIIPDLLKLSKPNKEKFFIGYSDITALHLFLSQEWGWKTIHGSNIADLLKPEQDQGNFTKLAEILKGKVKQVTIDNLVPLNDIAKSSDLVNGKLTGGNLTMVQTSIGTSWQIKTKGKILFLEDVNVVPFRLDRELLHLKQAGLLEDVKAIIFGSFGKDLDATMLVLRNFADSLDIPVFKTNRFGHEKINDPIIYNTNSKIIKSKEFKLVMGV</sequence>
<protein>
    <recommendedName>
        <fullName>Putative carboxypeptidase RC0549</fullName>
        <ecNumber>3.4.16.-</ecNumber>
    </recommendedName>
</protein>
<comment type="similarity">
    <text evidence="2">Belongs to the peptidase S66 family.</text>
</comment>
<comment type="sequence caution" evidence="2">
    <conflict type="erroneous initiation">
        <sequence resource="EMBL-CDS" id="AAL03087"/>
    </conflict>
</comment>
<name>Y549_RICCN</name>
<feature type="chain" id="PRO_0000172843" description="Putative carboxypeptidase RC0549">
    <location>
        <begin position="1"/>
        <end position="315"/>
    </location>
</feature>
<feature type="active site" description="Nucleophile" evidence="1">
    <location>
        <position position="125"/>
    </location>
</feature>
<feature type="active site" description="Charge relay system" evidence="1">
    <location>
        <position position="225"/>
    </location>
</feature>
<feature type="active site" description="Charge relay system" evidence="1">
    <location>
        <position position="288"/>
    </location>
</feature>
<proteinExistence type="inferred from homology"/>
<reference key="1">
    <citation type="journal article" date="2001" name="Science">
        <title>Mechanisms of evolution in Rickettsia conorii and R. prowazekii.</title>
        <authorList>
            <person name="Ogata H."/>
            <person name="Audic S."/>
            <person name="Renesto-Audiffren P."/>
            <person name="Fournier P.-E."/>
            <person name="Barbe V."/>
            <person name="Samson D."/>
            <person name="Roux V."/>
            <person name="Cossart P."/>
            <person name="Weissenbach J."/>
            <person name="Claverie J.-M."/>
            <person name="Raoult D."/>
        </authorList>
    </citation>
    <scope>NUCLEOTIDE SEQUENCE [LARGE SCALE GENOMIC DNA]</scope>
    <source>
        <strain>ATCC VR-613 / Malish 7</strain>
    </source>
</reference>
<dbReference type="EC" id="3.4.16.-"/>
<dbReference type="EMBL" id="AE006914">
    <property type="protein sequence ID" value="AAL03087.1"/>
    <property type="status" value="ALT_INIT"/>
    <property type="molecule type" value="Genomic_DNA"/>
</dbReference>
<dbReference type="PIR" id="E97768">
    <property type="entry name" value="E97768"/>
</dbReference>
<dbReference type="RefSeq" id="WP_041471720.1">
    <property type="nucleotide sequence ID" value="NC_003103.1"/>
</dbReference>
<dbReference type="SMR" id="Q92I71"/>
<dbReference type="GeneID" id="927661"/>
<dbReference type="KEGG" id="rco:RC0549"/>
<dbReference type="PATRIC" id="fig|272944.4.peg.628"/>
<dbReference type="HOGENOM" id="CLU_034346_3_0_5"/>
<dbReference type="Proteomes" id="UP000000816">
    <property type="component" value="Chromosome"/>
</dbReference>
<dbReference type="GO" id="GO:0004180">
    <property type="term" value="F:carboxypeptidase activity"/>
    <property type="evidence" value="ECO:0007669"/>
    <property type="project" value="UniProtKB-KW"/>
</dbReference>
<dbReference type="GO" id="GO:0008236">
    <property type="term" value="F:serine-type peptidase activity"/>
    <property type="evidence" value="ECO:0007669"/>
    <property type="project" value="UniProtKB-KW"/>
</dbReference>
<dbReference type="GO" id="GO:0006508">
    <property type="term" value="P:proteolysis"/>
    <property type="evidence" value="ECO:0007669"/>
    <property type="project" value="UniProtKB-KW"/>
</dbReference>
<dbReference type="CDD" id="cd07025">
    <property type="entry name" value="Peptidase_S66"/>
    <property type="match status" value="1"/>
</dbReference>
<dbReference type="Gene3D" id="3.40.50.10740">
    <property type="entry name" value="Class I glutamine amidotransferase-like"/>
    <property type="match status" value="1"/>
</dbReference>
<dbReference type="Gene3D" id="3.50.30.60">
    <property type="entry name" value="LD-carboxypeptidase A C-terminal domain-like"/>
    <property type="match status" value="1"/>
</dbReference>
<dbReference type="InterPro" id="IPR027461">
    <property type="entry name" value="Carboxypeptidase_A_C_sf"/>
</dbReference>
<dbReference type="InterPro" id="IPR029062">
    <property type="entry name" value="Class_I_gatase-like"/>
</dbReference>
<dbReference type="InterPro" id="IPR027478">
    <property type="entry name" value="LdcA_N"/>
</dbReference>
<dbReference type="InterPro" id="IPR040449">
    <property type="entry name" value="Peptidase_S66_N"/>
</dbReference>
<dbReference type="InterPro" id="IPR040921">
    <property type="entry name" value="Peptidase_S66C"/>
</dbReference>
<dbReference type="InterPro" id="IPR003507">
    <property type="entry name" value="S66_fam"/>
</dbReference>
<dbReference type="PANTHER" id="PTHR30237">
    <property type="entry name" value="MURAMOYLTETRAPEPTIDE CARBOXYPEPTIDASE"/>
    <property type="match status" value="1"/>
</dbReference>
<dbReference type="PANTHER" id="PTHR30237:SF2">
    <property type="entry name" value="MUREIN TETRAPEPTIDE CARBOXYPEPTIDASE"/>
    <property type="match status" value="1"/>
</dbReference>
<dbReference type="Pfam" id="PF02016">
    <property type="entry name" value="Peptidase_S66"/>
    <property type="match status" value="1"/>
</dbReference>
<dbReference type="Pfam" id="PF17676">
    <property type="entry name" value="Peptidase_S66C"/>
    <property type="match status" value="1"/>
</dbReference>
<dbReference type="PIRSF" id="PIRSF028757">
    <property type="entry name" value="LD-carboxypeptidase"/>
    <property type="match status" value="1"/>
</dbReference>
<dbReference type="SUPFAM" id="SSF52317">
    <property type="entry name" value="Class I glutamine amidotransferase-like"/>
    <property type="match status" value="1"/>
</dbReference>
<dbReference type="SUPFAM" id="SSF141986">
    <property type="entry name" value="LD-carboxypeptidase A C-terminal domain-like"/>
    <property type="match status" value="1"/>
</dbReference>
<accession>Q92I71</accession>
<evidence type="ECO:0000250" key="1"/>
<evidence type="ECO:0000305" key="2"/>